<gene>
    <name type="primary">GLX2-1</name>
    <name type="synonym">GLY1</name>
    <name type="ordered locus">At2g43430</name>
    <name type="ORF">T1O24.17</name>
</gene>
<comment type="function">
    <text>Thiolesterase that catalyzes the hydrolysis of S-D-lactoyl-glutathione to form glutathione and D-lactic acid.</text>
</comment>
<comment type="catalytic activity">
    <reaction>
        <text>an S-(2-hydroxyacyl)glutathione + H2O = a 2-hydroxy carboxylate + glutathione + H(+)</text>
        <dbReference type="Rhea" id="RHEA:21864"/>
        <dbReference type="ChEBI" id="CHEBI:15377"/>
        <dbReference type="ChEBI" id="CHEBI:15378"/>
        <dbReference type="ChEBI" id="CHEBI:57925"/>
        <dbReference type="ChEBI" id="CHEBI:58896"/>
        <dbReference type="ChEBI" id="CHEBI:71261"/>
        <dbReference type="EC" id="3.1.2.6"/>
    </reaction>
</comment>
<comment type="cofactor">
    <cofactor evidence="1">
        <name>Fe(2+)</name>
        <dbReference type="ChEBI" id="CHEBI:29033"/>
    </cofactor>
    <cofactor evidence="1">
        <name>Fe(3+)</name>
        <dbReference type="ChEBI" id="CHEBI:29034"/>
    </cofactor>
    <cofactor evidence="1">
        <name>Zn(2+)</name>
        <dbReference type="ChEBI" id="CHEBI:29105"/>
    </cofactor>
    <text evidence="1">Binds 1 Fe(2+) or Fe(3+) and 1 Zn(2+) ion per subunit. Electron spin resonance indicates the presence of a mixture of protein molecules that contain either Fe(2+) or Zn(2+).</text>
</comment>
<comment type="pathway">
    <text>Secondary metabolite metabolism; methylglyoxal degradation; (R)-lactate from methylglyoxal: step 2/2.</text>
</comment>
<comment type="subcellular location">
    <subcellularLocation>
        <location>Mitochondrion</location>
    </subcellularLocation>
</comment>
<comment type="alternative products">
    <event type="alternative splicing"/>
    <isoform>
        <id>O24495-1</id>
        <name>1</name>
        <sequence type="displayed"/>
    </isoform>
    <text>A number of isoforms are produced. According to EST sequences.</text>
</comment>
<comment type="tissue specificity">
    <text evidence="4">Mainly expressed in roots, flowers and flower buds. Also detected in leaves.</text>
</comment>
<comment type="similarity">
    <text evidence="5">Belongs to the metallo-beta-lactamase superfamily. Glyoxalase II family.</text>
</comment>
<sequence length="331" mass="36500">MPVISKASSTTTNSSIPSCSRIGGQLCVWPGLRQLCLRKSLLYGVMWLLSMPLKTLRGARKTLKITHFCSISNMPSSLKIELVPCSKDNYAYLLHDEDTGTVGVVDPSEAAPVIEALSRKNWNLTYILNTHHHDDHIGGNAELKERYGAKVIGSAVDKDRIPGIDILLKDSDKWMFAGHEVRILDTPGHTQGHISFYFPGSATIFTGDLIYSLSCGTLSEGTPEQMLSSLQKIVSLPDDTNIYCGRENTAGNLKFALSVEPKNETLQSYATRVAHLRSQGLPSIPTTVKVEKACNPFLRISSKDIRKSLSIPDSATEAEALRRIQRARDRF</sequence>
<evidence type="ECO:0000250" key="1">
    <source>
        <dbReference type="UniProtKB" id="O24496"/>
    </source>
</evidence>
<evidence type="ECO:0000250" key="2">
    <source>
        <dbReference type="UniProtKB" id="Q16775"/>
    </source>
</evidence>
<evidence type="ECO:0000255" key="3"/>
<evidence type="ECO:0000269" key="4">
    <source>
    </source>
</evidence>
<evidence type="ECO:0000305" key="5"/>
<feature type="transit peptide" description="Mitochondrion" evidence="3">
    <location>
        <begin position="1"/>
        <end position="76"/>
    </location>
</feature>
<feature type="chain" id="PRO_0000012286" description="Hydroxyacylglutathione hydrolase 1, mitochondrial">
    <location>
        <begin position="77"/>
        <end position="331"/>
    </location>
</feature>
<feature type="binding site" evidence="2">
    <location>
        <position position="131"/>
    </location>
    <ligand>
        <name>Zn(2+)</name>
        <dbReference type="ChEBI" id="CHEBI:29105"/>
    </ligand>
</feature>
<feature type="binding site" evidence="2">
    <location>
        <position position="133"/>
    </location>
    <ligand>
        <name>Zn(2+)</name>
        <dbReference type="ChEBI" id="CHEBI:29105"/>
    </ligand>
</feature>
<feature type="binding site" evidence="2">
    <location>
        <position position="135"/>
    </location>
    <ligand>
        <name>Fe cation</name>
        <dbReference type="ChEBI" id="CHEBI:24875"/>
    </ligand>
</feature>
<feature type="binding site" evidence="2">
    <location>
        <position position="136"/>
    </location>
    <ligand>
        <name>Fe cation</name>
        <dbReference type="ChEBI" id="CHEBI:24875"/>
    </ligand>
</feature>
<feature type="binding site" evidence="2">
    <location>
        <position position="189"/>
    </location>
    <ligand>
        <name>Zn(2+)</name>
        <dbReference type="ChEBI" id="CHEBI:29105"/>
    </ligand>
</feature>
<feature type="binding site" evidence="2">
    <location>
        <position position="208"/>
    </location>
    <ligand>
        <name>Fe cation</name>
        <dbReference type="ChEBI" id="CHEBI:24875"/>
    </ligand>
</feature>
<feature type="binding site" evidence="2">
    <location>
        <position position="208"/>
    </location>
    <ligand>
        <name>Zn(2+)</name>
        <dbReference type="ChEBI" id="CHEBI:29105"/>
    </ligand>
</feature>
<feature type="binding site" evidence="2">
    <location>
        <begin position="246"/>
        <end position="248"/>
    </location>
    <ligand>
        <name>substrate</name>
    </ligand>
</feature>
<feature type="sequence conflict" description="In Ref. 1; AAC49866." evidence="5" ref="1">
    <original>D</original>
    <variation>H</variation>
    <location>
        <position position="159"/>
    </location>
</feature>
<protein>
    <recommendedName>
        <fullName>Hydroxyacylglutathione hydrolase 1, mitochondrial</fullName>
        <ecNumber>3.1.2.6</ecNumber>
    </recommendedName>
    <alternativeName>
        <fullName>Glyoxalase II</fullName>
        <shortName>Glx II</shortName>
    </alternativeName>
</protein>
<keyword id="KW-0025">Alternative splicing</keyword>
<keyword id="KW-0378">Hydrolase</keyword>
<keyword id="KW-0408">Iron</keyword>
<keyword id="KW-0479">Metal-binding</keyword>
<keyword id="KW-0496">Mitochondrion</keyword>
<keyword id="KW-1185">Reference proteome</keyword>
<keyword id="KW-0809">Transit peptide</keyword>
<keyword id="KW-0862">Zinc</keyword>
<proteinExistence type="evidence at transcript level"/>
<accession>O24495</accession>
<accession>O22857</accession>
<accession>O24494</accession>
<name>GLO2M_ARATH</name>
<dbReference type="EC" id="3.1.2.6"/>
<dbReference type="EMBL" id="U90927">
    <property type="protein sequence ID" value="AAC49865.1"/>
    <property type="molecule type" value="Genomic_DNA"/>
</dbReference>
<dbReference type="EMBL" id="U90928">
    <property type="protein sequence ID" value="AAC49866.1"/>
    <property type="molecule type" value="mRNA"/>
</dbReference>
<dbReference type="EMBL" id="AC002335">
    <property type="protein sequence ID" value="AAB64315.2"/>
    <property type="molecule type" value="Genomic_DNA"/>
</dbReference>
<dbReference type="EMBL" id="CP002685">
    <property type="protein sequence ID" value="AEC10268.1"/>
    <property type="molecule type" value="Genomic_DNA"/>
</dbReference>
<dbReference type="EMBL" id="AY091278">
    <property type="protein sequence ID" value="AAM14217.1"/>
    <property type="molecule type" value="mRNA"/>
</dbReference>
<dbReference type="EMBL" id="AY063806">
    <property type="protein sequence ID" value="AAL36162.1"/>
    <property type="molecule type" value="mRNA"/>
</dbReference>
<dbReference type="PIR" id="A84866">
    <property type="entry name" value="A84866"/>
</dbReference>
<dbReference type="RefSeq" id="NP_565999.1">
    <molecule id="O24495-1"/>
    <property type="nucleotide sequence ID" value="NM_129904.3"/>
</dbReference>
<dbReference type="SMR" id="O24495"/>
<dbReference type="FunCoup" id="O24495">
    <property type="interactions" value="387"/>
</dbReference>
<dbReference type="STRING" id="3702.O24495"/>
<dbReference type="PaxDb" id="3702-AT2G43430.1"/>
<dbReference type="ProteomicsDB" id="248585">
    <molecule id="O24495-1"/>
</dbReference>
<dbReference type="EnsemblPlants" id="AT2G43430.1">
    <molecule id="O24495-1"/>
    <property type="protein sequence ID" value="AT2G43430.1"/>
    <property type="gene ID" value="AT2G43430"/>
</dbReference>
<dbReference type="GeneID" id="818944"/>
<dbReference type="Gramene" id="AT2G43430.1">
    <molecule id="O24495-1"/>
    <property type="protein sequence ID" value="AT2G43430.1"/>
    <property type="gene ID" value="AT2G43430"/>
</dbReference>
<dbReference type="KEGG" id="ath:AT2G43430"/>
<dbReference type="Araport" id="AT2G43430"/>
<dbReference type="TAIR" id="AT2G43430">
    <property type="gene designation" value="GLX2-1"/>
</dbReference>
<dbReference type="eggNOG" id="KOG0813">
    <property type="taxonomic scope" value="Eukaryota"/>
</dbReference>
<dbReference type="InParanoid" id="O24495"/>
<dbReference type="PhylomeDB" id="O24495"/>
<dbReference type="UniPathway" id="UPA00619">
    <property type="reaction ID" value="UER00676"/>
</dbReference>
<dbReference type="PRO" id="PR:O24495"/>
<dbReference type="Proteomes" id="UP000006548">
    <property type="component" value="Chromosome 2"/>
</dbReference>
<dbReference type="ExpressionAtlas" id="O24495">
    <property type="expression patterns" value="baseline and differential"/>
</dbReference>
<dbReference type="GO" id="GO:0005739">
    <property type="term" value="C:mitochondrion"/>
    <property type="evidence" value="ECO:0007669"/>
    <property type="project" value="UniProtKB-SubCell"/>
</dbReference>
<dbReference type="GO" id="GO:0008800">
    <property type="term" value="F:beta-lactamase activity"/>
    <property type="evidence" value="ECO:0000314"/>
    <property type="project" value="TAIR"/>
</dbReference>
<dbReference type="GO" id="GO:0004416">
    <property type="term" value="F:hydroxyacylglutathione hydrolase activity"/>
    <property type="evidence" value="ECO:0007669"/>
    <property type="project" value="UniProtKB-EC"/>
</dbReference>
<dbReference type="GO" id="GO:0046872">
    <property type="term" value="F:metal ion binding"/>
    <property type="evidence" value="ECO:0000314"/>
    <property type="project" value="TAIR"/>
</dbReference>
<dbReference type="GO" id="GO:0008270">
    <property type="term" value="F:zinc ion binding"/>
    <property type="evidence" value="ECO:0007669"/>
    <property type="project" value="InterPro"/>
</dbReference>
<dbReference type="GO" id="GO:0017001">
    <property type="term" value="P:antibiotic catabolic process"/>
    <property type="evidence" value="ECO:0007669"/>
    <property type="project" value="InterPro"/>
</dbReference>
<dbReference type="GO" id="GO:0019243">
    <property type="term" value="P:methylglyoxal catabolic process to D-lactate via S-lactoyl-glutathione"/>
    <property type="evidence" value="ECO:0007669"/>
    <property type="project" value="InterPro"/>
</dbReference>
<dbReference type="GO" id="GO:0043200">
    <property type="term" value="P:response to amino acid"/>
    <property type="evidence" value="ECO:0000315"/>
    <property type="project" value="TAIR"/>
</dbReference>
<dbReference type="GO" id="GO:0034059">
    <property type="term" value="P:response to anoxia"/>
    <property type="evidence" value="ECO:0000315"/>
    <property type="project" value="TAIR"/>
</dbReference>
<dbReference type="GO" id="GO:0009651">
    <property type="term" value="P:response to salt stress"/>
    <property type="evidence" value="ECO:0000315"/>
    <property type="project" value="TAIR"/>
</dbReference>
<dbReference type="CDD" id="cd07723">
    <property type="entry name" value="hydroxyacylglutathione_hydrolase_MBL-fold"/>
    <property type="match status" value="1"/>
</dbReference>
<dbReference type="FunFam" id="3.60.15.10:FF:000019">
    <property type="entry name" value="Hydroxyacylglutathione hydrolase, mitochondrial"/>
    <property type="match status" value="1"/>
</dbReference>
<dbReference type="Gene3D" id="3.60.15.10">
    <property type="entry name" value="Ribonuclease Z/Hydroxyacylglutathione hydrolase-like"/>
    <property type="match status" value="1"/>
</dbReference>
<dbReference type="HAMAP" id="MF_01374">
    <property type="entry name" value="Glyoxalase_2"/>
    <property type="match status" value="1"/>
</dbReference>
<dbReference type="InterPro" id="IPR001018">
    <property type="entry name" value="Beta-lactamase_class-B_CS"/>
</dbReference>
<dbReference type="InterPro" id="IPR035680">
    <property type="entry name" value="Clx_II_MBL"/>
</dbReference>
<dbReference type="InterPro" id="IPR050110">
    <property type="entry name" value="Glyoxalase_II_hydrolase"/>
</dbReference>
<dbReference type="InterPro" id="IPR032282">
    <property type="entry name" value="HAGH_C"/>
</dbReference>
<dbReference type="InterPro" id="IPR017782">
    <property type="entry name" value="Hydroxyacylglutathione_Hdrlase"/>
</dbReference>
<dbReference type="InterPro" id="IPR001279">
    <property type="entry name" value="Metallo-B-lactamas"/>
</dbReference>
<dbReference type="InterPro" id="IPR036866">
    <property type="entry name" value="RibonucZ/Hydroxyglut_hydro"/>
</dbReference>
<dbReference type="NCBIfam" id="TIGR03413">
    <property type="entry name" value="GSH_gloB"/>
    <property type="match status" value="1"/>
</dbReference>
<dbReference type="PANTHER" id="PTHR43705">
    <property type="entry name" value="HYDROXYACYLGLUTATHIONE HYDROLASE"/>
    <property type="match status" value="1"/>
</dbReference>
<dbReference type="PANTHER" id="PTHR43705:SF1">
    <property type="entry name" value="HYDROXYACYLGLUTATHIONE HYDROLASE GLOB"/>
    <property type="match status" value="1"/>
</dbReference>
<dbReference type="Pfam" id="PF16123">
    <property type="entry name" value="HAGH_C"/>
    <property type="match status" value="1"/>
</dbReference>
<dbReference type="Pfam" id="PF00753">
    <property type="entry name" value="Lactamase_B"/>
    <property type="match status" value="1"/>
</dbReference>
<dbReference type="SMART" id="SM00849">
    <property type="entry name" value="Lactamase_B"/>
    <property type="match status" value="1"/>
</dbReference>
<dbReference type="SUPFAM" id="SSF56281">
    <property type="entry name" value="Metallo-hydrolase/oxidoreductase"/>
    <property type="match status" value="1"/>
</dbReference>
<organism>
    <name type="scientific">Arabidopsis thaliana</name>
    <name type="common">Mouse-ear cress</name>
    <dbReference type="NCBI Taxonomy" id="3702"/>
    <lineage>
        <taxon>Eukaryota</taxon>
        <taxon>Viridiplantae</taxon>
        <taxon>Streptophyta</taxon>
        <taxon>Embryophyta</taxon>
        <taxon>Tracheophyta</taxon>
        <taxon>Spermatophyta</taxon>
        <taxon>Magnoliopsida</taxon>
        <taxon>eudicotyledons</taxon>
        <taxon>Gunneridae</taxon>
        <taxon>Pentapetalae</taxon>
        <taxon>rosids</taxon>
        <taxon>malvids</taxon>
        <taxon>Brassicales</taxon>
        <taxon>Brassicaceae</taxon>
        <taxon>Camelineae</taxon>
        <taxon>Arabidopsis</taxon>
    </lineage>
</organism>
<reference key="1">
    <citation type="journal article" date="1997" name="Plant Mol. Biol.">
        <title>Molecular characterization of glyoxalase II from Arabidopsis thaliana.</title>
        <authorList>
            <person name="Maiti M.K."/>
            <person name="Krishnasamy S."/>
            <person name="Owen H.A."/>
            <person name="Makaroff C.A."/>
        </authorList>
    </citation>
    <scope>NUCLEOTIDE SEQUENCE [MRNA]</scope>
    <scope>TISSUE SPECIFICITY</scope>
    <source>
        <strain>cv. Wassilewskija</strain>
    </source>
</reference>
<reference key="2">
    <citation type="journal article" date="1999" name="Nature">
        <title>Sequence and analysis of chromosome 2 of the plant Arabidopsis thaliana.</title>
        <authorList>
            <person name="Lin X."/>
            <person name="Kaul S."/>
            <person name="Rounsley S.D."/>
            <person name="Shea T.P."/>
            <person name="Benito M.-I."/>
            <person name="Town C.D."/>
            <person name="Fujii C.Y."/>
            <person name="Mason T.M."/>
            <person name="Bowman C.L."/>
            <person name="Barnstead M.E."/>
            <person name="Feldblyum T.V."/>
            <person name="Buell C.R."/>
            <person name="Ketchum K.A."/>
            <person name="Lee J.J."/>
            <person name="Ronning C.M."/>
            <person name="Koo H.L."/>
            <person name="Moffat K.S."/>
            <person name="Cronin L.A."/>
            <person name="Shen M."/>
            <person name="Pai G."/>
            <person name="Van Aken S."/>
            <person name="Umayam L."/>
            <person name="Tallon L.J."/>
            <person name="Gill J.E."/>
            <person name="Adams M.D."/>
            <person name="Carrera A.J."/>
            <person name="Creasy T.H."/>
            <person name="Goodman H.M."/>
            <person name="Somerville C.R."/>
            <person name="Copenhaver G.P."/>
            <person name="Preuss D."/>
            <person name="Nierman W.C."/>
            <person name="White O."/>
            <person name="Eisen J.A."/>
            <person name="Salzberg S.L."/>
            <person name="Fraser C.M."/>
            <person name="Venter J.C."/>
        </authorList>
    </citation>
    <scope>NUCLEOTIDE SEQUENCE [LARGE SCALE GENOMIC DNA]</scope>
    <source>
        <strain>cv. Columbia</strain>
    </source>
</reference>
<reference key="3">
    <citation type="journal article" date="2017" name="Plant J.">
        <title>Araport11: a complete reannotation of the Arabidopsis thaliana reference genome.</title>
        <authorList>
            <person name="Cheng C.Y."/>
            <person name="Krishnakumar V."/>
            <person name="Chan A.P."/>
            <person name="Thibaud-Nissen F."/>
            <person name="Schobel S."/>
            <person name="Town C.D."/>
        </authorList>
    </citation>
    <scope>GENOME REANNOTATION</scope>
    <source>
        <strain>cv. Columbia</strain>
    </source>
</reference>
<reference key="4">
    <citation type="journal article" date="2003" name="Science">
        <title>Empirical analysis of transcriptional activity in the Arabidopsis genome.</title>
        <authorList>
            <person name="Yamada K."/>
            <person name="Lim J."/>
            <person name="Dale J.M."/>
            <person name="Chen H."/>
            <person name="Shinn P."/>
            <person name="Palm C.J."/>
            <person name="Southwick A.M."/>
            <person name="Wu H.C."/>
            <person name="Kim C.J."/>
            <person name="Nguyen M."/>
            <person name="Pham P.K."/>
            <person name="Cheuk R.F."/>
            <person name="Karlin-Newmann G."/>
            <person name="Liu S.X."/>
            <person name="Lam B."/>
            <person name="Sakano H."/>
            <person name="Wu T."/>
            <person name="Yu G."/>
            <person name="Miranda M."/>
            <person name="Quach H.L."/>
            <person name="Tripp M."/>
            <person name="Chang C.H."/>
            <person name="Lee J.M."/>
            <person name="Toriumi M.J."/>
            <person name="Chan M.M."/>
            <person name="Tang C.C."/>
            <person name="Onodera C.S."/>
            <person name="Deng J.M."/>
            <person name="Akiyama K."/>
            <person name="Ansari Y."/>
            <person name="Arakawa T."/>
            <person name="Banh J."/>
            <person name="Banno F."/>
            <person name="Bowser L."/>
            <person name="Brooks S.Y."/>
            <person name="Carninci P."/>
            <person name="Chao Q."/>
            <person name="Choy N."/>
            <person name="Enju A."/>
            <person name="Goldsmith A.D."/>
            <person name="Gurjal M."/>
            <person name="Hansen N.F."/>
            <person name="Hayashizaki Y."/>
            <person name="Johnson-Hopson C."/>
            <person name="Hsuan V.W."/>
            <person name="Iida K."/>
            <person name="Karnes M."/>
            <person name="Khan S."/>
            <person name="Koesema E."/>
            <person name="Ishida J."/>
            <person name="Jiang P.X."/>
            <person name="Jones T."/>
            <person name="Kawai J."/>
            <person name="Kamiya A."/>
            <person name="Meyers C."/>
            <person name="Nakajima M."/>
            <person name="Narusaka M."/>
            <person name="Seki M."/>
            <person name="Sakurai T."/>
            <person name="Satou M."/>
            <person name="Tamse R."/>
            <person name="Vaysberg M."/>
            <person name="Wallender E.K."/>
            <person name="Wong C."/>
            <person name="Yamamura Y."/>
            <person name="Yuan S."/>
            <person name="Shinozaki K."/>
            <person name="Davis R.W."/>
            <person name="Theologis A."/>
            <person name="Ecker J.R."/>
        </authorList>
    </citation>
    <scope>NUCLEOTIDE SEQUENCE [LARGE SCALE MRNA]</scope>
    <source>
        <strain>cv. Columbia</strain>
    </source>
</reference>